<organism>
    <name type="scientific">Francisella philomiragia subsp. philomiragia (strain ATCC 25017 / CCUG 19701 / FSC 153 / O#319-036)</name>
    <dbReference type="NCBI Taxonomy" id="484022"/>
    <lineage>
        <taxon>Bacteria</taxon>
        <taxon>Pseudomonadati</taxon>
        <taxon>Pseudomonadota</taxon>
        <taxon>Gammaproteobacteria</taxon>
        <taxon>Thiotrichales</taxon>
        <taxon>Francisellaceae</taxon>
        <taxon>Francisella</taxon>
    </lineage>
</organism>
<keyword id="KW-0414">Isoprene biosynthesis</keyword>
<keyword id="KW-0456">Lyase</keyword>
<keyword id="KW-0479">Metal-binding</keyword>
<name>ISPF_FRAP2</name>
<feature type="chain" id="PRO_1000075912" description="2-C-methyl-D-erythritol 2,4-cyclodiphosphate synthase">
    <location>
        <begin position="1"/>
        <end position="159"/>
    </location>
</feature>
<feature type="binding site" evidence="1">
    <location>
        <begin position="10"/>
        <end position="12"/>
    </location>
    <ligand>
        <name>4-CDP-2-C-methyl-D-erythritol 2-phosphate</name>
        <dbReference type="ChEBI" id="CHEBI:57919"/>
    </ligand>
</feature>
<feature type="binding site" evidence="1">
    <location>
        <position position="10"/>
    </location>
    <ligand>
        <name>a divalent metal cation</name>
        <dbReference type="ChEBI" id="CHEBI:60240"/>
    </ligand>
</feature>
<feature type="binding site" evidence="1">
    <location>
        <position position="12"/>
    </location>
    <ligand>
        <name>a divalent metal cation</name>
        <dbReference type="ChEBI" id="CHEBI:60240"/>
    </ligand>
</feature>
<feature type="binding site" evidence="1">
    <location>
        <begin position="37"/>
        <end position="38"/>
    </location>
    <ligand>
        <name>4-CDP-2-C-methyl-D-erythritol 2-phosphate</name>
        <dbReference type="ChEBI" id="CHEBI:57919"/>
    </ligand>
</feature>
<feature type="binding site" evidence="1">
    <location>
        <position position="45"/>
    </location>
    <ligand>
        <name>a divalent metal cation</name>
        <dbReference type="ChEBI" id="CHEBI:60240"/>
    </ligand>
</feature>
<feature type="binding site" evidence="1">
    <location>
        <begin position="59"/>
        <end position="61"/>
    </location>
    <ligand>
        <name>4-CDP-2-C-methyl-D-erythritol 2-phosphate</name>
        <dbReference type="ChEBI" id="CHEBI:57919"/>
    </ligand>
</feature>
<feature type="binding site" evidence="1">
    <location>
        <begin position="64"/>
        <end position="68"/>
    </location>
    <ligand>
        <name>4-CDP-2-C-methyl-D-erythritol 2-phosphate</name>
        <dbReference type="ChEBI" id="CHEBI:57919"/>
    </ligand>
</feature>
<feature type="binding site" evidence="1">
    <location>
        <begin position="103"/>
        <end position="109"/>
    </location>
    <ligand>
        <name>4-CDP-2-C-methyl-D-erythritol 2-phosphate</name>
        <dbReference type="ChEBI" id="CHEBI:57919"/>
    </ligand>
</feature>
<feature type="binding site" evidence="1">
    <location>
        <begin position="135"/>
        <end position="138"/>
    </location>
    <ligand>
        <name>4-CDP-2-C-methyl-D-erythritol 2-phosphate</name>
        <dbReference type="ChEBI" id="CHEBI:57919"/>
    </ligand>
</feature>
<feature type="binding site" evidence="1">
    <location>
        <position position="142"/>
    </location>
    <ligand>
        <name>4-CDP-2-C-methyl-D-erythritol 2-phosphate</name>
        <dbReference type="ChEBI" id="CHEBI:57919"/>
    </ligand>
</feature>
<feature type="binding site" evidence="1">
    <location>
        <position position="145"/>
    </location>
    <ligand>
        <name>4-CDP-2-C-methyl-D-erythritol 2-phosphate</name>
        <dbReference type="ChEBI" id="CHEBI:57919"/>
    </ligand>
</feature>
<feature type="site" description="Transition state stabilizer" evidence="1">
    <location>
        <position position="37"/>
    </location>
</feature>
<feature type="site" description="Transition state stabilizer" evidence="1">
    <location>
        <position position="136"/>
    </location>
</feature>
<accession>B0TYX5</accession>
<reference key="1">
    <citation type="submission" date="2007-12" db="EMBL/GenBank/DDBJ databases">
        <title>Complete sequence of chromosome of Francisella philomiragia subsp. philomiragia ATCC 25017.</title>
        <authorList>
            <consortium name="US DOE Joint Genome Institute"/>
            <person name="Copeland A."/>
            <person name="Lucas S."/>
            <person name="Lapidus A."/>
            <person name="Barry K."/>
            <person name="Detter J.C."/>
            <person name="Glavina del Rio T."/>
            <person name="Hammon N."/>
            <person name="Israni S."/>
            <person name="Dalin E."/>
            <person name="Tice H."/>
            <person name="Pitluck S."/>
            <person name="Chain P."/>
            <person name="Malfatti S."/>
            <person name="Shin M."/>
            <person name="Vergez L."/>
            <person name="Schmutz J."/>
            <person name="Larimer F."/>
            <person name="Land M."/>
            <person name="Hauser L."/>
            <person name="Richardson P."/>
        </authorList>
    </citation>
    <scope>NUCLEOTIDE SEQUENCE [LARGE SCALE GENOMIC DNA]</scope>
    <source>
        <strain>ATCC 25017 / CCUG 19701 / FSC 153 / O#319-036</strain>
    </source>
</reference>
<dbReference type="EC" id="4.6.1.12" evidence="1"/>
<dbReference type="EMBL" id="CP000937">
    <property type="protein sequence ID" value="ABZ87721.1"/>
    <property type="molecule type" value="Genomic_DNA"/>
</dbReference>
<dbReference type="SMR" id="B0TYX5"/>
<dbReference type="KEGG" id="fph:Fphi_1496"/>
<dbReference type="eggNOG" id="COG0245">
    <property type="taxonomic scope" value="Bacteria"/>
</dbReference>
<dbReference type="HOGENOM" id="CLU_084630_2_0_6"/>
<dbReference type="UniPathway" id="UPA00056">
    <property type="reaction ID" value="UER00095"/>
</dbReference>
<dbReference type="GO" id="GO:0008685">
    <property type="term" value="F:2-C-methyl-D-erythritol 2,4-cyclodiphosphate synthase activity"/>
    <property type="evidence" value="ECO:0007669"/>
    <property type="project" value="UniProtKB-UniRule"/>
</dbReference>
<dbReference type="GO" id="GO:0046872">
    <property type="term" value="F:metal ion binding"/>
    <property type="evidence" value="ECO:0007669"/>
    <property type="project" value="UniProtKB-KW"/>
</dbReference>
<dbReference type="GO" id="GO:0019288">
    <property type="term" value="P:isopentenyl diphosphate biosynthetic process, methylerythritol 4-phosphate pathway"/>
    <property type="evidence" value="ECO:0007669"/>
    <property type="project" value="UniProtKB-UniRule"/>
</dbReference>
<dbReference type="GO" id="GO:0016114">
    <property type="term" value="P:terpenoid biosynthetic process"/>
    <property type="evidence" value="ECO:0007669"/>
    <property type="project" value="InterPro"/>
</dbReference>
<dbReference type="CDD" id="cd00554">
    <property type="entry name" value="MECDP_synthase"/>
    <property type="match status" value="1"/>
</dbReference>
<dbReference type="FunFam" id="3.30.1330.50:FF:000001">
    <property type="entry name" value="2-C-methyl-D-erythritol 2,4-cyclodiphosphate synthase"/>
    <property type="match status" value="1"/>
</dbReference>
<dbReference type="Gene3D" id="3.30.1330.50">
    <property type="entry name" value="2-C-methyl-D-erythritol 2,4-cyclodiphosphate synthase"/>
    <property type="match status" value="1"/>
</dbReference>
<dbReference type="HAMAP" id="MF_00107">
    <property type="entry name" value="IspF"/>
    <property type="match status" value="1"/>
</dbReference>
<dbReference type="InterPro" id="IPR003526">
    <property type="entry name" value="MECDP_synthase"/>
</dbReference>
<dbReference type="InterPro" id="IPR020555">
    <property type="entry name" value="MECDP_synthase_CS"/>
</dbReference>
<dbReference type="InterPro" id="IPR036571">
    <property type="entry name" value="MECDP_synthase_sf"/>
</dbReference>
<dbReference type="NCBIfam" id="TIGR00151">
    <property type="entry name" value="ispF"/>
    <property type="match status" value="1"/>
</dbReference>
<dbReference type="PANTHER" id="PTHR43181">
    <property type="entry name" value="2-C-METHYL-D-ERYTHRITOL 2,4-CYCLODIPHOSPHATE SYNTHASE, CHLOROPLASTIC"/>
    <property type="match status" value="1"/>
</dbReference>
<dbReference type="PANTHER" id="PTHR43181:SF1">
    <property type="entry name" value="2-C-METHYL-D-ERYTHRITOL 2,4-CYCLODIPHOSPHATE SYNTHASE, CHLOROPLASTIC"/>
    <property type="match status" value="1"/>
</dbReference>
<dbReference type="Pfam" id="PF02542">
    <property type="entry name" value="YgbB"/>
    <property type="match status" value="1"/>
</dbReference>
<dbReference type="SUPFAM" id="SSF69765">
    <property type="entry name" value="IpsF-like"/>
    <property type="match status" value="1"/>
</dbReference>
<dbReference type="PROSITE" id="PS01350">
    <property type="entry name" value="ISPF"/>
    <property type="match status" value="1"/>
</dbReference>
<comment type="function">
    <text evidence="1">Involved in the biosynthesis of isopentenyl diphosphate (IPP) and dimethylallyl diphosphate (DMAPP), two major building blocks of isoprenoid compounds. Catalyzes the conversion of 4-diphosphocytidyl-2-C-methyl-D-erythritol 2-phosphate (CDP-ME2P) to 2-C-methyl-D-erythritol 2,4-cyclodiphosphate (ME-CPP) with a corresponding release of cytidine 5-monophosphate (CMP).</text>
</comment>
<comment type="catalytic activity">
    <reaction evidence="1">
        <text>4-CDP-2-C-methyl-D-erythritol 2-phosphate = 2-C-methyl-D-erythritol 2,4-cyclic diphosphate + CMP</text>
        <dbReference type="Rhea" id="RHEA:23864"/>
        <dbReference type="ChEBI" id="CHEBI:57919"/>
        <dbReference type="ChEBI" id="CHEBI:58483"/>
        <dbReference type="ChEBI" id="CHEBI:60377"/>
        <dbReference type="EC" id="4.6.1.12"/>
    </reaction>
</comment>
<comment type="cofactor">
    <cofactor evidence="1">
        <name>a divalent metal cation</name>
        <dbReference type="ChEBI" id="CHEBI:60240"/>
    </cofactor>
    <text evidence="1">Binds 1 divalent metal cation per subunit.</text>
</comment>
<comment type="pathway">
    <text evidence="1">Isoprenoid biosynthesis; isopentenyl diphosphate biosynthesis via DXP pathway; isopentenyl diphosphate from 1-deoxy-D-xylulose 5-phosphate: step 4/6.</text>
</comment>
<comment type="subunit">
    <text evidence="1">Homotrimer.</text>
</comment>
<comment type="similarity">
    <text evidence="1">Belongs to the IspF family.</text>
</comment>
<proteinExistence type="inferred from homology"/>
<evidence type="ECO:0000255" key="1">
    <source>
        <dbReference type="HAMAP-Rule" id="MF_00107"/>
    </source>
</evidence>
<protein>
    <recommendedName>
        <fullName evidence="1">2-C-methyl-D-erythritol 2,4-cyclodiphosphate synthase</fullName>
        <shortName evidence="1">MECDP-synthase</shortName>
        <shortName evidence="1">MECPP-synthase</shortName>
        <shortName evidence="1">MECPS</shortName>
        <ecNumber evidence="1">4.6.1.12</ecNumber>
    </recommendedName>
</protein>
<gene>
    <name evidence="1" type="primary">ispF</name>
    <name type="ordered locus">Fphi_1496</name>
</gene>
<sequence>MSFRIGHGYDVHKFTSTKKNIILGGIEIPYEMGLEAHSDGDVLIHALCDAILGALCLGDIGKHFPDTDMEYKNTDSKFFLAEIKKMLDDKEYSISNIDCTIIAQAPKMLPHIEKMKACLASVLEIQINQINIKATTTEQLGFIGRKEGIATHVVCLLNR</sequence>